<protein>
    <recommendedName>
        <fullName evidence="1">tRNA-2-methylthio-N(6)-dimethylallyladenosine synthase</fullName>
        <ecNumber evidence="1">2.8.4.3</ecNumber>
    </recommendedName>
    <alternativeName>
        <fullName evidence="1">(Dimethylallyl)adenosine tRNA methylthiotransferase MiaB</fullName>
    </alternativeName>
    <alternativeName>
        <fullName evidence="1">tRNA-i(6)A37 methylthiotransferase</fullName>
    </alternativeName>
</protein>
<evidence type="ECO:0000255" key="1">
    <source>
        <dbReference type="HAMAP-Rule" id="MF_01864"/>
    </source>
</evidence>
<evidence type="ECO:0000255" key="2">
    <source>
        <dbReference type="PROSITE-ProRule" id="PRU01266"/>
    </source>
</evidence>
<keyword id="KW-0004">4Fe-4S</keyword>
<keyword id="KW-0963">Cytoplasm</keyword>
<keyword id="KW-0408">Iron</keyword>
<keyword id="KW-0411">Iron-sulfur</keyword>
<keyword id="KW-0479">Metal-binding</keyword>
<keyword id="KW-1185">Reference proteome</keyword>
<keyword id="KW-0949">S-adenosyl-L-methionine</keyword>
<keyword id="KW-0808">Transferase</keyword>
<keyword id="KW-0819">tRNA processing</keyword>
<dbReference type="EC" id="2.8.4.3" evidence="1"/>
<dbReference type="EMBL" id="CP000097">
    <property type="protein sequence ID" value="ABB26498.1"/>
    <property type="molecule type" value="Genomic_DNA"/>
</dbReference>
<dbReference type="RefSeq" id="WP_011360316.1">
    <property type="nucleotide sequence ID" value="NC_007513.1"/>
</dbReference>
<dbReference type="SMR" id="Q3AV90"/>
<dbReference type="STRING" id="316279.Syncc9902_1540"/>
<dbReference type="KEGG" id="sye:Syncc9902_1540"/>
<dbReference type="eggNOG" id="COG0621">
    <property type="taxonomic scope" value="Bacteria"/>
</dbReference>
<dbReference type="HOGENOM" id="CLU_018697_2_2_3"/>
<dbReference type="Proteomes" id="UP000002712">
    <property type="component" value="Chromosome"/>
</dbReference>
<dbReference type="GO" id="GO:0005737">
    <property type="term" value="C:cytoplasm"/>
    <property type="evidence" value="ECO:0007669"/>
    <property type="project" value="UniProtKB-SubCell"/>
</dbReference>
<dbReference type="GO" id="GO:0051539">
    <property type="term" value="F:4 iron, 4 sulfur cluster binding"/>
    <property type="evidence" value="ECO:0007669"/>
    <property type="project" value="UniProtKB-UniRule"/>
</dbReference>
<dbReference type="GO" id="GO:0046872">
    <property type="term" value="F:metal ion binding"/>
    <property type="evidence" value="ECO:0007669"/>
    <property type="project" value="UniProtKB-KW"/>
</dbReference>
<dbReference type="GO" id="GO:0035596">
    <property type="term" value="F:methylthiotransferase activity"/>
    <property type="evidence" value="ECO:0007669"/>
    <property type="project" value="InterPro"/>
</dbReference>
<dbReference type="GO" id="GO:0035600">
    <property type="term" value="P:tRNA methylthiolation"/>
    <property type="evidence" value="ECO:0007669"/>
    <property type="project" value="TreeGrafter"/>
</dbReference>
<dbReference type="CDD" id="cd01335">
    <property type="entry name" value="Radical_SAM"/>
    <property type="match status" value="1"/>
</dbReference>
<dbReference type="FunFam" id="3.40.50.12160:FF:000006">
    <property type="entry name" value="tRNA-2-methylthio-N(6)-dimethylallyladenosine synthase"/>
    <property type="match status" value="1"/>
</dbReference>
<dbReference type="FunFam" id="3.80.30.20:FF:000001">
    <property type="entry name" value="tRNA-2-methylthio-N(6)-dimethylallyladenosine synthase 2"/>
    <property type="match status" value="1"/>
</dbReference>
<dbReference type="Gene3D" id="3.40.50.12160">
    <property type="entry name" value="Methylthiotransferase, N-terminal domain"/>
    <property type="match status" value="1"/>
</dbReference>
<dbReference type="Gene3D" id="3.80.30.20">
    <property type="entry name" value="tm_1862 like domain"/>
    <property type="match status" value="1"/>
</dbReference>
<dbReference type="HAMAP" id="MF_01864">
    <property type="entry name" value="tRNA_metthiotr_MiaB"/>
    <property type="match status" value="1"/>
</dbReference>
<dbReference type="InterPro" id="IPR006638">
    <property type="entry name" value="Elp3/MiaA/NifB-like_rSAM"/>
</dbReference>
<dbReference type="InterPro" id="IPR005839">
    <property type="entry name" value="Methylthiotransferase"/>
</dbReference>
<dbReference type="InterPro" id="IPR020612">
    <property type="entry name" value="Methylthiotransferase_CS"/>
</dbReference>
<dbReference type="InterPro" id="IPR013848">
    <property type="entry name" value="Methylthiotransferase_N"/>
</dbReference>
<dbReference type="InterPro" id="IPR038135">
    <property type="entry name" value="Methylthiotransferase_N_sf"/>
</dbReference>
<dbReference type="InterPro" id="IPR006463">
    <property type="entry name" value="MiaB_methiolase"/>
</dbReference>
<dbReference type="InterPro" id="IPR007197">
    <property type="entry name" value="rSAM"/>
</dbReference>
<dbReference type="InterPro" id="IPR023404">
    <property type="entry name" value="rSAM_horseshoe"/>
</dbReference>
<dbReference type="InterPro" id="IPR002792">
    <property type="entry name" value="TRAM_dom"/>
</dbReference>
<dbReference type="NCBIfam" id="TIGR01574">
    <property type="entry name" value="miaB-methiolase"/>
    <property type="match status" value="1"/>
</dbReference>
<dbReference type="NCBIfam" id="TIGR00089">
    <property type="entry name" value="MiaB/RimO family radical SAM methylthiotransferase"/>
    <property type="match status" value="1"/>
</dbReference>
<dbReference type="PANTHER" id="PTHR43020">
    <property type="entry name" value="CDK5 REGULATORY SUBUNIT-ASSOCIATED PROTEIN 1"/>
    <property type="match status" value="1"/>
</dbReference>
<dbReference type="PANTHER" id="PTHR43020:SF2">
    <property type="entry name" value="MITOCHONDRIAL TRNA METHYLTHIOTRANSFERASE CDK5RAP1"/>
    <property type="match status" value="1"/>
</dbReference>
<dbReference type="Pfam" id="PF04055">
    <property type="entry name" value="Radical_SAM"/>
    <property type="match status" value="1"/>
</dbReference>
<dbReference type="Pfam" id="PF01938">
    <property type="entry name" value="TRAM"/>
    <property type="match status" value="1"/>
</dbReference>
<dbReference type="Pfam" id="PF00919">
    <property type="entry name" value="UPF0004"/>
    <property type="match status" value="1"/>
</dbReference>
<dbReference type="SFLD" id="SFLDF00273">
    <property type="entry name" value="(dimethylallyl)adenosine_tRNA"/>
    <property type="match status" value="1"/>
</dbReference>
<dbReference type="SFLD" id="SFLDG01082">
    <property type="entry name" value="B12-binding_domain_containing"/>
    <property type="match status" value="1"/>
</dbReference>
<dbReference type="SFLD" id="SFLDS00029">
    <property type="entry name" value="Radical_SAM"/>
    <property type="match status" value="1"/>
</dbReference>
<dbReference type="SMART" id="SM00729">
    <property type="entry name" value="Elp3"/>
    <property type="match status" value="1"/>
</dbReference>
<dbReference type="SUPFAM" id="SSF102114">
    <property type="entry name" value="Radical SAM enzymes"/>
    <property type="match status" value="1"/>
</dbReference>
<dbReference type="PROSITE" id="PS51449">
    <property type="entry name" value="MTTASE_N"/>
    <property type="match status" value="1"/>
</dbReference>
<dbReference type="PROSITE" id="PS01278">
    <property type="entry name" value="MTTASE_RADICAL"/>
    <property type="match status" value="1"/>
</dbReference>
<dbReference type="PROSITE" id="PS51918">
    <property type="entry name" value="RADICAL_SAM"/>
    <property type="match status" value="1"/>
</dbReference>
<dbReference type="PROSITE" id="PS50926">
    <property type="entry name" value="TRAM"/>
    <property type="match status" value="1"/>
</dbReference>
<comment type="function">
    <text evidence="1">Catalyzes the methylthiolation of N6-(dimethylallyl)adenosine (i(6)A), leading to the formation of 2-methylthio-N6-(dimethylallyl)adenosine (ms(2)i(6)A) at position 37 in tRNAs that read codons beginning with uridine.</text>
</comment>
<comment type="catalytic activity">
    <reaction evidence="1">
        <text>N(6)-dimethylallyladenosine(37) in tRNA + (sulfur carrier)-SH + AH2 + 2 S-adenosyl-L-methionine = 2-methylsulfanyl-N(6)-dimethylallyladenosine(37) in tRNA + (sulfur carrier)-H + 5'-deoxyadenosine + L-methionine + A + S-adenosyl-L-homocysteine + 2 H(+)</text>
        <dbReference type="Rhea" id="RHEA:37067"/>
        <dbReference type="Rhea" id="RHEA-COMP:10375"/>
        <dbReference type="Rhea" id="RHEA-COMP:10376"/>
        <dbReference type="Rhea" id="RHEA-COMP:14737"/>
        <dbReference type="Rhea" id="RHEA-COMP:14739"/>
        <dbReference type="ChEBI" id="CHEBI:13193"/>
        <dbReference type="ChEBI" id="CHEBI:15378"/>
        <dbReference type="ChEBI" id="CHEBI:17319"/>
        <dbReference type="ChEBI" id="CHEBI:17499"/>
        <dbReference type="ChEBI" id="CHEBI:29917"/>
        <dbReference type="ChEBI" id="CHEBI:57844"/>
        <dbReference type="ChEBI" id="CHEBI:57856"/>
        <dbReference type="ChEBI" id="CHEBI:59789"/>
        <dbReference type="ChEBI" id="CHEBI:64428"/>
        <dbReference type="ChEBI" id="CHEBI:74415"/>
        <dbReference type="ChEBI" id="CHEBI:74417"/>
        <dbReference type="EC" id="2.8.4.3"/>
    </reaction>
</comment>
<comment type="cofactor">
    <cofactor evidence="1">
        <name>[4Fe-4S] cluster</name>
        <dbReference type="ChEBI" id="CHEBI:49883"/>
    </cofactor>
    <text evidence="1">Binds 2 [4Fe-4S] clusters. One cluster is coordinated with 3 cysteines and an exchangeable S-adenosyl-L-methionine.</text>
</comment>
<comment type="subunit">
    <text evidence="1">Monomer.</text>
</comment>
<comment type="subcellular location">
    <subcellularLocation>
        <location evidence="1">Cytoplasm</location>
    </subcellularLocation>
</comment>
<comment type="similarity">
    <text evidence="1">Belongs to the methylthiotransferase family. MiaB subfamily.</text>
</comment>
<accession>Q3AV90</accession>
<gene>
    <name evidence="1" type="primary">miaB</name>
    <name type="ordered locus">Syncc9902_1540</name>
</gene>
<organism>
    <name type="scientific">Synechococcus sp. (strain CC9902)</name>
    <dbReference type="NCBI Taxonomy" id="316279"/>
    <lineage>
        <taxon>Bacteria</taxon>
        <taxon>Bacillati</taxon>
        <taxon>Cyanobacteriota</taxon>
        <taxon>Cyanophyceae</taxon>
        <taxon>Synechococcales</taxon>
        <taxon>Synechococcaceae</taxon>
        <taxon>Synechococcus</taxon>
    </lineage>
</organism>
<feature type="chain" id="PRO_0000374597" description="tRNA-2-methylthio-N(6)-dimethylallyladenosine synthase">
    <location>
        <begin position="1"/>
        <end position="472"/>
    </location>
</feature>
<feature type="domain" description="MTTase N-terminal" evidence="1">
    <location>
        <begin position="22"/>
        <end position="138"/>
    </location>
</feature>
<feature type="domain" description="Radical SAM core" evidence="2">
    <location>
        <begin position="159"/>
        <end position="396"/>
    </location>
</feature>
<feature type="domain" description="TRAM" evidence="1">
    <location>
        <begin position="399"/>
        <end position="467"/>
    </location>
</feature>
<feature type="binding site" evidence="1">
    <location>
        <position position="31"/>
    </location>
    <ligand>
        <name>[4Fe-4S] cluster</name>
        <dbReference type="ChEBI" id="CHEBI:49883"/>
        <label>1</label>
    </ligand>
</feature>
<feature type="binding site" evidence="1">
    <location>
        <position position="67"/>
    </location>
    <ligand>
        <name>[4Fe-4S] cluster</name>
        <dbReference type="ChEBI" id="CHEBI:49883"/>
        <label>1</label>
    </ligand>
</feature>
<feature type="binding site" evidence="1">
    <location>
        <position position="101"/>
    </location>
    <ligand>
        <name>[4Fe-4S] cluster</name>
        <dbReference type="ChEBI" id="CHEBI:49883"/>
        <label>1</label>
    </ligand>
</feature>
<feature type="binding site" evidence="1">
    <location>
        <position position="173"/>
    </location>
    <ligand>
        <name>[4Fe-4S] cluster</name>
        <dbReference type="ChEBI" id="CHEBI:49883"/>
        <label>2</label>
        <note>4Fe-4S-S-AdoMet</note>
    </ligand>
</feature>
<feature type="binding site" evidence="1">
    <location>
        <position position="177"/>
    </location>
    <ligand>
        <name>[4Fe-4S] cluster</name>
        <dbReference type="ChEBI" id="CHEBI:49883"/>
        <label>2</label>
        <note>4Fe-4S-S-AdoMet</note>
    </ligand>
</feature>
<feature type="binding site" evidence="1">
    <location>
        <position position="180"/>
    </location>
    <ligand>
        <name>[4Fe-4S] cluster</name>
        <dbReference type="ChEBI" id="CHEBI:49883"/>
        <label>2</label>
        <note>4Fe-4S-S-AdoMet</note>
    </ligand>
</feature>
<sequence>MTATSLKTLTPPSKQGLDQNRRSYWITTFGCQMNKADSERMAGILESMGYCEATAELDADLVLYNTCTIRDNAEQKVYSYLGRQAQRKRDNPNLTLVVAGCVAQQEGESLLRRVPELDLVMGPQHANRLETLLQQVDSGQQVVATEEHHILEDITTARRDSAICGWVNVIYGCNERCTYCVVPSVRGQEQSRRPEAIRLEMEGLAAQGFKEITLLGQNIDAYGRDLPGITAEGRREHTLTDLLHHVHDVEGIERLRFATSHPRYFTERLIDACADLSKVCEHFHIPFQSGDNALLKSMARGYTVERYRRIIDRIRDRMPDASISADVIVGFPGETDAQYRRTLDLIDEIAFDQVNTAAYSPRPNTPAATWDNQLPESVKVERLKEINALVERNARERNIRYQGRTEEVLAEGINPKDPEQLMGRTRTNRLTFFSATSPDGHLYQPGDLVNVRIDAVRSFSLSGTPLPSNALH</sequence>
<name>MIAB_SYNS9</name>
<proteinExistence type="inferred from homology"/>
<reference key="1">
    <citation type="submission" date="2005-08" db="EMBL/GenBank/DDBJ databases">
        <title>Complete sequence of Synechococcus sp. CC9902.</title>
        <authorList>
            <person name="Copeland A."/>
            <person name="Lucas S."/>
            <person name="Lapidus A."/>
            <person name="Barry K."/>
            <person name="Detter J.C."/>
            <person name="Glavina T."/>
            <person name="Hammon N."/>
            <person name="Israni S."/>
            <person name="Pitluck S."/>
            <person name="Martinez M."/>
            <person name="Schmutz J."/>
            <person name="Larimer F."/>
            <person name="Land M."/>
            <person name="Kyrpides N."/>
            <person name="Ivanova N."/>
            <person name="Richardson P."/>
        </authorList>
    </citation>
    <scope>NUCLEOTIDE SEQUENCE [LARGE SCALE GENOMIC DNA]</scope>
    <source>
        <strain>CC9902</strain>
    </source>
</reference>